<sequence length="330" mass="36081">MNLDEYVRSLRGEVMGHHHGGPGRYEQKFKAFPISFLPKEKHSLESGGKILLPPSALNALSRLNIQYPMLFEISNPISGKKSHCGVLEFIAEEGICYLPLWMMQNLQLKEGEFIDIKNATLAKGTFVKIQPRTSNFIDISNPKAVLENSLRKFATLTKDDEIMIDYNNTKYYLKVVELKPANAISIIEADVSVDFAPPMDSKEATSPSTSSPGSHVSGPSKGLTFGPASTSAKPIPGGKKKKDESDSDSDSDDEPKFKAFAGTGARLDGKVGTPLGTSPKTLNTNNNNNNNNNNNNNNNNNNNNNSNNNNTKNEDTKFKSFSGKGHSLKD</sequence>
<name>UFD1_DICDI</name>
<organism>
    <name type="scientific">Dictyostelium discoideum</name>
    <name type="common">Social amoeba</name>
    <dbReference type="NCBI Taxonomy" id="44689"/>
    <lineage>
        <taxon>Eukaryota</taxon>
        <taxon>Amoebozoa</taxon>
        <taxon>Evosea</taxon>
        <taxon>Eumycetozoa</taxon>
        <taxon>Dictyostelia</taxon>
        <taxon>Dictyosteliales</taxon>
        <taxon>Dictyosteliaceae</taxon>
        <taxon>Dictyostelium</taxon>
    </lineage>
</organism>
<reference key="1">
    <citation type="journal article" date="2002" name="Nature">
        <title>Sequence and analysis of chromosome 2 of Dictyostelium discoideum.</title>
        <authorList>
            <person name="Gloeckner G."/>
            <person name="Eichinger L."/>
            <person name="Szafranski K."/>
            <person name="Pachebat J.A."/>
            <person name="Bankier A.T."/>
            <person name="Dear P.H."/>
            <person name="Lehmann R."/>
            <person name="Baumgart C."/>
            <person name="Parra G."/>
            <person name="Abril J.F."/>
            <person name="Guigo R."/>
            <person name="Kumpf K."/>
            <person name="Tunggal B."/>
            <person name="Cox E.C."/>
            <person name="Quail M.A."/>
            <person name="Platzer M."/>
            <person name="Rosenthal A."/>
            <person name="Noegel A.A."/>
        </authorList>
    </citation>
    <scope>NUCLEOTIDE SEQUENCE [LARGE SCALE GENOMIC DNA]</scope>
    <source>
        <strain>AX4</strain>
    </source>
</reference>
<reference key="2">
    <citation type="journal article" date="2005" name="Nature">
        <title>The genome of the social amoeba Dictyostelium discoideum.</title>
        <authorList>
            <person name="Eichinger L."/>
            <person name="Pachebat J.A."/>
            <person name="Gloeckner G."/>
            <person name="Rajandream M.A."/>
            <person name="Sucgang R."/>
            <person name="Berriman M."/>
            <person name="Song J."/>
            <person name="Olsen R."/>
            <person name="Szafranski K."/>
            <person name="Xu Q."/>
            <person name="Tunggal B."/>
            <person name="Kummerfeld S."/>
            <person name="Madera M."/>
            <person name="Konfortov B.A."/>
            <person name="Rivero F."/>
            <person name="Bankier A.T."/>
            <person name="Lehmann R."/>
            <person name="Hamlin N."/>
            <person name="Davies R."/>
            <person name="Gaudet P."/>
            <person name="Fey P."/>
            <person name="Pilcher K."/>
            <person name="Chen G."/>
            <person name="Saunders D."/>
            <person name="Sodergren E.J."/>
            <person name="Davis P."/>
            <person name="Kerhornou A."/>
            <person name="Nie X."/>
            <person name="Hall N."/>
            <person name="Anjard C."/>
            <person name="Hemphill L."/>
            <person name="Bason N."/>
            <person name="Farbrother P."/>
            <person name="Desany B."/>
            <person name="Just E."/>
            <person name="Morio T."/>
            <person name="Rost R."/>
            <person name="Churcher C.M."/>
            <person name="Cooper J."/>
            <person name="Haydock S."/>
            <person name="van Driessche N."/>
            <person name="Cronin A."/>
            <person name="Goodhead I."/>
            <person name="Muzny D.M."/>
            <person name="Mourier T."/>
            <person name="Pain A."/>
            <person name="Lu M."/>
            <person name="Harper D."/>
            <person name="Lindsay R."/>
            <person name="Hauser H."/>
            <person name="James K.D."/>
            <person name="Quiles M."/>
            <person name="Madan Babu M."/>
            <person name="Saito T."/>
            <person name="Buchrieser C."/>
            <person name="Wardroper A."/>
            <person name="Felder M."/>
            <person name="Thangavelu M."/>
            <person name="Johnson D."/>
            <person name="Knights A."/>
            <person name="Loulseged H."/>
            <person name="Mungall K.L."/>
            <person name="Oliver K."/>
            <person name="Price C."/>
            <person name="Quail M.A."/>
            <person name="Urushihara H."/>
            <person name="Hernandez J."/>
            <person name="Rabbinowitsch E."/>
            <person name="Steffen D."/>
            <person name="Sanders M."/>
            <person name="Ma J."/>
            <person name="Kohara Y."/>
            <person name="Sharp S."/>
            <person name="Simmonds M.N."/>
            <person name="Spiegler S."/>
            <person name="Tivey A."/>
            <person name="Sugano S."/>
            <person name="White B."/>
            <person name="Walker D."/>
            <person name="Woodward J.R."/>
            <person name="Winckler T."/>
            <person name="Tanaka Y."/>
            <person name="Shaulsky G."/>
            <person name="Schleicher M."/>
            <person name="Weinstock G.M."/>
            <person name="Rosenthal A."/>
            <person name="Cox E.C."/>
            <person name="Chisholm R.L."/>
            <person name="Gibbs R.A."/>
            <person name="Loomis W.F."/>
            <person name="Platzer M."/>
            <person name="Kay R.R."/>
            <person name="Williams J.G."/>
            <person name="Dear P.H."/>
            <person name="Noegel A.A."/>
            <person name="Barrell B.G."/>
            <person name="Kuspa A."/>
        </authorList>
    </citation>
    <scope>NUCLEOTIDE SEQUENCE [LARGE SCALE GENOMIC DNA]</scope>
    <source>
        <strain>AX4</strain>
    </source>
</reference>
<proteinExistence type="inferred from homology"/>
<comment type="function">
    <text evidence="1">Functions at a post-ubiquitation step in the ubiquitin fusion degradation (UFD) pathway.</text>
</comment>
<comment type="pathway">
    <text>Protein degradation; proteasomal ubiquitin-dependent pathway.</text>
</comment>
<comment type="similarity">
    <text evidence="3">Belongs to the UFD1 family.</text>
</comment>
<dbReference type="EMBL" id="AAFI02000006">
    <property type="protein sequence ID" value="EAL71893.1"/>
    <property type="molecule type" value="Genomic_DNA"/>
</dbReference>
<dbReference type="RefSeq" id="XP_645814.1">
    <property type="nucleotide sequence ID" value="XM_640722.1"/>
</dbReference>
<dbReference type="SMR" id="Q55BK0"/>
<dbReference type="FunCoup" id="Q55BK0">
    <property type="interactions" value="1035"/>
</dbReference>
<dbReference type="STRING" id="44689.Q55BK0"/>
<dbReference type="PaxDb" id="44689-DDB0238023"/>
<dbReference type="EnsemblProtists" id="EAL71893">
    <property type="protein sequence ID" value="EAL71893"/>
    <property type="gene ID" value="DDB_G0271122"/>
</dbReference>
<dbReference type="GeneID" id="8617805"/>
<dbReference type="KEGG" id="ddi:DDB_G0271122"/>
<dbReference type="dictyBase" id="DDB_G0271122">
    <property type="gene designation" value="ufd1"/>
</dbReference>
<dbReference type="VEuPathDB" id="AmoebaDB:DDB_G0271122"/>
<dbReference type="eggNOG" id="KOG1816">
    <property type="taxonomic scope" value="Eukaryota"/>
</dbReference>
<dbReference type="HOGENOM" id="CLU_037790_2_0_1"/>
<dbReference type="InParanoid" id="Q55BK0"/>
<dbReference type="OMA" id="QRITHCG"/>
<dbReference type="PhylomeDB" id="Q55BK0"/>
<dbReference type="Reactome" id="R-DDI-8951664">
    <property type="pathway name" value="Neddylation"/>
</dbReference>
<dbReference type="Reactome" id="R-DDI-9755511">
    <property type="pathway name" value="KEAP1-NFE2L2 pathway"/>
</dbReference>
<dbReference type="UniPathway" id="UPA00144"/>
<dbReference type="PRO" id="PR:Q55BK0"/>
<dbReference type="Proteomes" id="UP000002195">
    <property type="component" value="Chromosome 2"/>
</dbReference>
<dbReference type="GO" id="GO:0034098">
    <property type="term" value="C:VCP-NPL4-UFD1 AAA ATPase complex"/>
    <property type="evidence" value="ECO:0000318"/>
    <property type="project" value="GO_Central"/>
</dbReference>
<dbReference type="GO" id="GO:0031593">
    <property type="term" value="F:polyubiquitin modification-dependent protein binding"/>
    <property type="evidence" value="ECO:0000318"/>
    <property type="project" value="GO_Central"/>
</dbReference>
<dbReference type="GO" id="GO:0036503">
    <property type="term" value="P:ERAD pathway"/>
    <property type="evidence" value="ECO:0000318"/>
    <property type="project" value="GO_Central"/>
</dbReference>
<dbReference type="GO" id="GO:0043161">
    <property type="term" value="P:proteasome-mediated ubiquitin-dependent protein catabolic process"/>
    <property type="evidence" value="ECO:0007669"/>
    <property type="project" value="UniProtKB-UniPathway"/>
</dbReference>
<dbReference type="GO" id="GO:0006511">
    <property type="term" value="P:ubiquitin-dependent protein catabolic process"/>
    <property type="evidence" value="ECO:0000250"/>
    <property type="project" value="dictyBase"/>
</dbReference>
<dbReference type="FunFam" id="2.40.40.50:FF:000001">
    <property type="entry name" value="Ubiquitin fusion degradation protein 1 homolog"/>
    <property type="match status" value="1"/>
</dbReference>
<dbReference type="FunFam" id="3.10.330.10:FF:000002">
    <property type="entry name" value="ubiquitin fusion degradation protein 1 homolog"/>
    <property type="match status" value="1"/>
</dbReference>
<dbReference type="Gene3D" id="3.10.330.10">
    <property type="match status" value="1"/>
</dbReference>
<dbReference type="Gene3D" id="2.40.40.50">
    <property type="entry name" value="Ubiquitin fusion degradation protein UFD1, N-terminal domain"/>
    <property type="match status" value="1"/>
</dbReference>
<dbReference type="InterPro" id="IPR004854">
    <property type="entry name" value="Ufd1-like"/>
</dbReference>
<dbReference type="InterPro" id="IPR042299">
    <property type="entry name" value="Ufd1-like_Nn"/>
</dbReference>
<dbReference type="InterPro" id="IPR055417">
    <property type="entry name" value="UFD1_N1"/>
</dbReference>
<dbReference type="InterPro" id="IPR055418">
    <property type="entry name" value="UFD1_N2"/>
</dbReference>
<dbReference type="PANTHER" id="PTHR12555">
    <property type="entry name" value="UBIQUITIN FUSION DEGRADATON PROTEIN 1"/>
    <property type="match status" value="1"/>
</dbReference>
<dbReference type="PANTHER" id="PTHR12555:SF13">
    <property type="entry name" value="UBIQUITIN RECOGNITION FACTOR IN ER-ASSOCIATED DEGRADATION PROTEIN 1"/>
    <property type="match status" value="1"/>
</dbReference>
<dbReference type="Pfam" id="PF03152">
    <property type="entry name" value="UFD1_N1"/>
    <property type="match status" value="1"/>
</dbReference>
<dbReference type="Pfam" id="PF24842">
    <property type="entry name" value="UFD1_N2"/>
    <property type="match status" value="1"/>
</dbReference>
<accession>Q55BK0</accession>
<gene>
    <name type="primary">ufd1</name>
    <name type="ORF">DDB_G0271122</name>
</gene>
<evidence type="ECO:0000250" key="1"/>
<evidence type="ECO:0000256" key="2">
    <source>
        <dbReference type="SAM" id="MobiDB-lite"/>
    </source>
</evidence>
<evidence type="ECO:0000305" key="3"/>
<keyword id="KW-1185">Reference proteome</keyword>
<keyword id="KW-0833">Ubl conjugation pathway</keyword>
<feature type="chain" id="PRO_0000328335" description="Ubiquitin fusion degradation protein 1 homolog">
    <location>
        <begin position="1"/>
        <end position="330"/>
    </location>
</feature>
<feature type="region of interest" description="Disordered" evidence="2">
    <location>
        <begin position="198"/>
        <end position="330"/>
    </location>
</feature>
<feature type="compositionally biased region" description="Low complexity" evidence="2">
    <location>
        <begin position="206"/>
        <end position="222"/>
    </location>
</feature>
<feature type="compositionally biased region" description="Low complexity" evidence="2">
    <location>
        <begin position="283"/>
        <end position="310"/>
    </location>
</feature>
<protein>
    <recommendedName>
        <fullName>Ubiquitin fusion degradation protein 1 homolog</fullName>
    </recommendedName>
</protein>